<feature type="chain" id="PRO_0000268957" description="HTH-type transcriptional repressor NsrR">
    <location>
        <begin position="1"/>
        <end position="141"/>
    </location>
</feature>
<feature type="domain" description="HTH rrf2-type" evidence="1">
    <location>
        <begin position="2"/>
        <end position="129"/>
    </location>
</feature>
<feature type="DNA-binding region" description="H-T-H motif" evidence="1">
    <location>
        <begin position="28"/>
        <end position="51"/>
    </location>
</feature>
<feature type="binding site" evidence="1">
    <location>
        <position position="91"/>
    </location>
    <ligand>
        <name>[2Fe-2S] cluster</name>
        <dbReference type="ChEBI" id="CHEBI:190135"/>
    </ligand>
</feature>
<feature type="binding site" evidence="1">
    <location>
        <position position="96"/>
    </location>
    <ligand>
        <name>[2Fe-2S] cluster</name>
        <dbReference type="ChEBI" id="CHEBI:190135"/>
    </ligand>
</feature>
<feature type="binding site" evidence="1">
    <location>
        <position position="102"/>
    </location>
    <ligand>
        <name>[2Fe-2S] cluster</name>
        <dbReference type="ChEBI" id="CHEBI:190135"/>
    </ligand>
</feature>
<sequence length="141" mass="15645">MQLTSFTDYGLRALIYMASLPDGQMTSISQVTEVYGVSRNHMVKIINQLSRVGLVTAVRGKNGGIRLGKPADQILIGDVVRQMEPLTLVNCSSDFCHITPACRLKQVLNQAVQSFLKELDNYTLADMVKDNSPLYKLLLVE</sequence>
<keyword id="KW-0001">2Fe-2S</keyword>
<keyword id="KW-0238">DNA-binding</keyword>
<keyword id="KW-0408">Iron</keyword>
<keyword id="KW-0411">Iron-sulfur</keyword>
<keyword id="KW-0479">Metal-binding</keyword>
<keyword id="KW-0678">Repressor</keyword>
<keyword id="KW-0804">Transcription</keyword>
<keyword id="KW-0805">Transcription regulation</keyword>
<name>NSRR_YERPS</name>
<gene>
    <name evidence="1" type="primary">nsrR</name>
    <name type="ordered locus">YPTB0431</name>
</gene>
<reference key="1">
    <citation type="journal article" date="2004" name="Proc. Natl. Acad. Sci. U.S.A.">
        <title>Insights into the evolution of Yersinia pestis through whole-genome comparison with Yersinia pseudotuberculosis.</title>
        <authorList>
            <person name="Chain P.S.G."/>
            <person name="Carniel E."/>
            <person name="Larimer F.W."/>
            <person name="Lamerdin J."/>
            <person name="Stoutland P.O."/>
            <person name="Regala W.M."/>
            <person name="Georgescu A.M."/>
            <person name="Vergez L.M."/>
            <person name="Land M.L."/>
            <person name="Motin V.L."/>
            <person name="Brubaker R.R."/>
            <person name="Fowler J."/>
            <person name="Hinnebusch J."/>
            <person name="Marceau M."/>
            <person name="Medigue C."/>
            <person name="Simonet M."/>
            <person name="Chenal-Francisque V."/>
            <person name="Souza B."/>
            <person name="Dacheux D."/>
            <person name="Elliott J.M."/>
            <person name="Derbise A."/>
            <person name="Hauser L.J."/>
            <person name="Garcia E."/>
        </authorList>
    </citation>
    <scope>NUCLEOTIDE SEQUENCE [LARGE SCALE GENOMIC DNA]</scope>
    <source>
        <strain>IP32953</strain>
    </source>
</reference>
<protein>
    <recommendedName>
        <fullName evidence="1">HTH-type transcriptional repressor NsrR</fullName>
    </recommendedName>
</protein>
<dbReference type="EMBL" id="BX936398">
    <property type="protein sequence ID" value="CAH19671.1"/>
    <property type="molecule type" value="Genomic_DNA"/>
</dbReference>
<dbReference type="RefSeq" id="WP_002217229.1">
    <property type="nucleotide sequence ID" value="NZ_CP009712.1"/>
</dbReference>
<dbReference type="SMR" id="Q66FA9"/>
<dbReference type="GeneID" id="57974228"/>
<dbReference type="KEGG" id="ypo:BZ17_2133"/>
<dbReference type="KEGG" id="yps:YPTB0431"/>
<dbReference type="PATRIC" id="fig|273123.14.peg.2261"/>
<dbReference type="Proteomes" id="UP000001011">
    <property type="component" value="Chromosome"/>
</dbReference>
<dbReference type="GO" id="GO:0005829">
    <property type="term" value="C:cytosol"/>
    <property type="evidence" value="ECO:0007669"/>
    <property type="project" value="TreeGrafter"/>
</dbReference>
<dbReference type="GO" id="GO:0051537">
    <property type="term" value="F:2 iron, 2 sulfur cluster binding"/>
    <property type="evidence" value="ECO:0007669"/>
    <property type="project" value="UniProtKB-KW"/>
</dbReference>
<dbReference type="GO" id="GO:0003700">
    <property type="term" value="F:DNA-binding transcription factor activity"/>
    <property type="evidence" value="ECO:0007669"/>
    <property type="project" value="UniProtKB-UniRule"/>
</dbReference>
<dbReference type="GO" id="GO:0003690">
    <property type="term" value="F:double-stranded DNA binding"/>
    <property type="evidence" value="ECO:0007669"/>
    <property type="project" value="UniProtKB-UniRule"/>
</dbReference>
<dbReference type="GO" id="GO:0005506">
    <property type="term" value="F:iron ion binding"/>
    <property type="evidence" value="ECO:0007669"/>
    <property type="project" value="UniProtKB-UniRule"/>
</dbReference>
<dbReference type="GO" id="GO:0045892">
    <property type="term" value="P:negative regulation of DNA-templated transcription"/>
    <property type="evidence" value="ECO:0007669"/>
    <property type="project" value="InterPro"/>
</dbReference>
<dbReference type="FunFam" id="1.10.10.10:FF:000105">
    <property type="entry name" value="HTH-type transcriptional repressor NsrR"/>
    <property type="match status" value="1"/>
</dbReference>
<dbReference type="Gene3D" id="1.10.10.10">
    <property type="entry name" value="Winged helix-like DNA-binding domain superfamily/Winged helix DNA-binding domain"/>
    <property type="match status" value="1"/>
</dbReference>
<dbReference type="HAMAP" id="MF_01177">
    <property type="entry name" value="HTH_type_NsrR"/>
    <property type="match status" value="1"/>
</dbReference>
<dbReference type="InterPro" id="IPR030489">
    <property type="entry name" value="TR_Rrf2-type_CS"/>
</dbReference>
<dbReference type="InterPro" id="IPR000944">
    <property type="entry name" value="Tscrpt_reg_Rrf2"/>
</dbReference>
<dbReference type="InterPro" id="IPR023761">
    <property type="entry name" value="Tscrpt_rep_HTH_NsrR"/>
</dbReference>
<dbReference type="InterPro" id="IPR036388">
    <property type="entry name" value="WH-like_DNA-bd_sf"/>
</dbReference>
<dbReference type="InterPro" id="IPR036390">
    <property type="entry name" value="WH_DNA-bd_sf"/>
</dbReference>
<dbReference type="NCBIfam" id="NF008240">
    <property type="entry name" value="PRK11014.1"/>
    <property type="match status" value="1"/>
</dbReference>
<dbReference type="NCBIfam" id="TIGR00738">
    <property type="entry name" value="rrf2_super"/>
    <property type="match status" value="1"/>
</dbReference>
<dbReference type="PANTHER" id="PTHR33221:SF4">
    <property type="entry name" value="HTH-TYPE TRANSCRIPTIONAL REPRESSOR NSRR"/>
    <property type="match status" value="1"/>
</dbReference>
<dbReference type="PANTHER" id="PTHR33221">
    <property type="entry name" value="WINGED HELIX-TURN-HELIX TRANSCRIPTIONAL REGULATOR, RRF2 FAMILY"/>
    <property type="match status" value="1"/>
</dbReference>
<dbReference type="Pfam" id="PF02082">
    <property type="entry name" value="Rrf2"/>
    <property type="match status" value="1"/>
</dbReference>
<dbReference type="SUPFAM" id="SSF46785">
    <property type="entry name" value="Winged helix' DNA-binding domain"/>
    <property type="match status" value="1"/>
</dbReference>
<dbReference type="PROSITE" id="PS01332">
    <property type="entry name" value="HTH_RRF2_1"/>
    <property type="match status" value="1"/>
</dbReference>
<dbReference type="PROSITE" id="PS51197">
    <property type="entry name" value="HTH_RRF2_2"/>
    <property type="match status" value="1"/>
</dbReference>
<evidence type="ECO:0000255" key="1">
    <source>
        <dbReference type="HAMAP-Rule" id="MF_01177"/>
    </source>
</evidence>
<accession>Q66FA9</accession>
<comment type="function">
    <text evidence="1">Nitric oxide-sensitive repressor of genes involved in protecting the cell against nitrosative stress. May require iron for activity.</text>
</comment>
<comment type="cofactor">
    <cofactor evidence="1">
        <name>[2Fe-2S] cluster</name>
        <dbReference type="ChEBI" id="CHEBI:190135"/>
    </cofactor>
    <text evidence="1">Binds 1 [2Fe-2S] cluster per subunit.</text>
</comment>
<organism>
    <name type="scientific">Yersinia pseudotuberculosis serotype I (strain IP32953)</name>
    <dbReference type="NCBI Taxonomy" id="273123"/>
    <lineage>
        <taxon>Bacteria</taxon>
        <taxon>Pseudomonadati</taxon>
        <taxon>Pseudomonadota</taxon>
        <taxon>Gammaproteobacteria</taxon>
        <taxon>Enterobacterales</taxon>
        <taxon>Yersiniaceae</taxon>
        <taxon>Yersinia</taxon>
    </lineage>
</organism>
<proteinExistence type="inferred from homology"/>